<organism>
    <name type="scientific">Homo sapiens</name>
    <name type="common">Human</name>
    <dbReference type="NCBI Taxonomy" id="9606"/>
    <lineage>
        <taxon>Eukaryota</taxon>
        <taxon>Metazoa</taxon>
        <taxon>Chordata</taxon>
        <taxon>Craniata</taxon>
        <taxon>Vertebrata</taxon>
        <taxon>Euteleostomi</taxon>
        <taxon>Mammalia</taxon>
        <taxon>Eutheria</taxon>
        <taxon>Euarchontoglires</taxon>
        <taxon>Primates</taxon>
        <taxon>Haplorrhini</taxon>
        <taxon>Catarrhini</taxon>
        <taxon>Hominidae</taxon>
        <taxon>Homo</taxon>
    </lineage>
</organism>
<proteinExistence type="evidence at protein level"/>
<reference key="1">
    <citation type="journal article" date="1993" name="Nucleic Acids Res.">
        <title>Homology in accessory proteins of replicative polymerases -- E. coli to humans.</title>
        <authorList>
            <person name="O'Donnell M."/>
            <person name="Onrust R."/>
            <person name="Dean F.B."/>
            <person name="Chen M."/>
            <person name="Hurwitz J."/>
        </authorList>
    </citation>
    <scope>NUCLEOTIDE SEQUENCE [MRNA] (ISOFORM 1)</scope>
</reference>
<reference key="2">
    <citation type="submission" date="2002-02" db="EMBL/GenBank/DDBJ databases">
        <authorList>
            <consortium name="NIEHS SNPs program"/>
        </authorList>
    </citation>
    <scope>NUCLEOTIDE SEQUENCE [GENOMIC DNA]</scope>
    <scope>VARIANT VAL-16</scope>
</reference>
<reference key="3">
    <citation type="journal article" date="2004" name="Nature">
        <title>The DNA sequence and analysis of human chromosome 13.</title>
        <authorList>
            <person name="Dunham A."/>
            <person name="Matthews L.H."/>
            <person name="Burton J."/>
            <person name="Ashurst J.L."/>
            <person name="Howe K.L."/>
            <person name="Ashcroft K.J."/>
            <person name="Beare D.M."/>
            <person name="Burford D.C."/>
            <person name="Hunt S.E."/>
            <person name="Griffiths-Jones S."/>
            <person name="Jones M.C."/>
            <person name="Keenan S.J."/>
            <person name="Oliver K."/>
            <person name="Scott C.E."/>
            <person name="Ainscough R."/>
            <person name="Almeida J.P."/>
            <person name="Ambrose K.D."/>
            <person name="Andrews D.T."/>
            <person name="Ashwell R.I.S."/>
            <person name="Babbage A.K."/>
            <person name="Bagguley C.L."/>
            <person name="Bailey J."/>
            <person name="Bannerjee R."/>
            <person name="Barlow K.F."/>
            <person name="Bates K."/>
            <person name="Beasley H."/>
            <person name="Bird C.P."/>
            <person name="Bray-Allen S."/>
            <person name="Brown A.J."/>
            <person name="Brown J.Y."/>
            <person name="Burrill W."/>
            <person name="Carder C."/>
            <person name="Carter N.P."/>
            <person name="Chapman J.C."/>
            <person name="Clamp M.E."/>
            <person name="Clark S.Y."/>
            <person name="Clarke G."/>
            <person name="Clee C.M."/>
            <person name="Clegg S.C."/>
            <person name="Cobley V."/>
            <person name="Collins J.E."/>
            <person name="Corby N."/>
            <person name="Coville G.J."/>
            <person name="Deloukas P."/>
            <person name="Dhami P."/>
            <person name="Dunham I."/>
            <person name="Dunn M."/>
            <person name="Earthrowl M.E."/>
            <person name="Ellington A.G."/>
            <person name="Faulkner L."/>
            <person name="Frankish A.G."/>
            <person name="Frankland J."/>
            <person name="French L."/>
            <person name="Garner P."/>
            <person name="Garnett J."/>
            <person name="Gilbert J.G.R."/>
            <person name="Gilson C.J."/>
            <person name="Ghori J."/>
            <person name="Grafham D.V."/>
            <person name="Gribble S.M."/>
            <person name="Griffiths C."/>
            <person name="Hall R.E."/>
            <person name="Hammond S."/>
            <person name="Harley J.L."/>
            <person name="Hart E.A."/>
            <person name="Heath P.D."/>
            <person name="Howden P.J."/>
            <person name="Huckle E.J."/>
            <person name="Hunt P.J."/>
            <person name="Hunt A.R."/>
            <person name="Johnson C."/>
            <person name="Johnson D."/>
            <person name="Kay M."/>
            <person name="Kimberley A.M."/>
            <person name="King A."/>
            <person name="Laird G.K."/>
            <person name="Langford C.J."/>
            <person name="Lawlor S."/>
            <person name="Leongamornlert D.A."/>
            <person name="Lloyd D.M."/>
            <person name="Lloyd C."/>
            <person name="Loveland J.E."/>
            <person name="Lovell J."/>
            <person name="Martin S."/>
            <person name="Mashreghi-Mohammadi M."/>
            <person name="McLaren S.J."/>
            <person name="McMurray A."/>
            <person name="Milne S."/>
            <person name="Moore M.J.F."/>
            <person name="Nickerson T."/>
            <person name="Palmer S.A."/>
            <person name="Pearce A.V."/>
            <person name="Peck A.I."/>
            <person name="Pelan S."/>
            <person name="Phillimore B."/>
            <person name="Porter K.M."/>
            <person name="Rice C.M."/>
            <person name="Searle S."/>
            <person name="Sehra H.K."/>
            <person name="Shownkeen R."/>
            <person name="Skuce C.D."/>
            <person name="Smith M."/>
            <person name="Steward C.A."/>
            <person name="Sycamore N."/>
            <person name="Tester J."/>
            <person name="Thomas D.W."/>
            <person name="Tracey A."/>
            <person name="Tromans A."/>
            <person name="Tubby B."/>
            <person name="Wall M."/>
            <person name="Wallis J.M."/>
            <person name="West A.P."/>
            <person name="Whitehead S.L."/>
            <person name="Willey D.L."/>
            <person name="Wilming L."/>
            <person name="Wray P.W."/>
            <person name="Wright M.W."/>
            <person name="Young L."/>
            <person name="Coulson A."/>
            <person name="Durbin R.M."/>
            <person name="Hubbard T."/>
            <person name="Sulston J.E."/>
            <person name="Beck S."/>
            <person name="Bentley D.R."/>
            <person name="Rogers J."/>
            <person name="Ross M.T."/>
        </authorList>
    </citation>
    <scope>NUCLEOTIDE SEQUENCE [LARGE SCALE GENOMIC DNA]</scope>
</reference>
<reference key="4">
    <citation type="submission" date="2005-07" db="EMBL/GenBank/DDBJ databases">
        <authorList>
            <person name="Mural R.J."/>
            <person name="Istrail S."/>
            <person name="Sutton G.G."/>
            <person name="Florea L."/>
            <person name="Halpern A.L."/>
            <person name="Mobarry C.M."/>
            <person name="Lippert R."/>
            <person name="Walenz B."/>
            <person name="Shatkay H."/>
            <person name="Dew I."/>
            <person name="Miller J.R."/>
            <person name="Flanigan M.J."/>
            <person name="Edwards N.J."/>
            <person name="Bolanos R."/>
            <person name="Fasulo D."/>
            <person name="Halldorsson B.V."/>
            <person name="Hannenhalli S."/>
            <person name="Turner R."/>
            <person name="Yooseph S."/>
            <person name="Lu F."/>
            <person name="Nusskern D.R."/>
            <person name="Shue B.C."/>
            <person name="Zheng X.H."/>
            <person name="Zhong F."/>
            <person name="Delcher A.L."/>
            <person name="Huson D.H."/>
            <person name="Kravitz S.A."/>
            <person name="Mouchard L."/>
            <person name="Reinert K."/>
            <person name="Remington K.A."/>
            <person name="Clark A.G."/>
            <person name="Waterman M.S."/>
            <person name="Eichler E.E."/>
            <person name="Adams M.D."/>
            <person name="Hunkapiller M.W."/>
            <person name="Myers E.W."/>
            <person name="Venter J.C."/>
        </authorList>
    </citation>
    <scope>NUCLEOTIDE SEQUENCE [LARGE SCALE GENOMIC DNA]</scope>
</reference>
<reference key="5">
    <citation type="journal article" date="2004" name="Genome Res.">
        <title>The status, quality, and expansion of the NIH full-length cDNA project: the Mammalian Gene Collection (MGC).</title>
        <authorList>
            <consortium name="The MGC Project Team"/>
        </authorList>
    </citation>
    <scope>NUCLEOTIDE SEQUENCE [LARGE SCALE MRNA] (ISOFORM 1)</scope>
    <scope>NUCLEOTIDE SEQUENCE [LARGE SCALE MRNA] OF 51-305 (ISOFORM 2)</scope>
    <source>
        <tissue>Embryonic stem cell</tissue>
        <tissue>Placenta</tissue>
    </source>
</reference>
<reference key="6">
    <citation type="journal article" date="1997" name="J. Biol. Chem.">
        <title>Replication factor C interacts with the C-terminal side of proliferating cell nuclear antigen.</title>
        <authorList>
            <person name="Mossi R."/>
            <person name="Jonsson Z.O."/>
            <person name="Allen B.L."/>
            <person name="Hardin S.H."/>
            <person name="Huebscher U."/>
        </authorList>
    </citation>
    <scope>SUBUNIT</scope>
</reference>
<reference key="7">
    <citation type="journal article" date="1998" name="J. Biol. Chem.">
        <title>Reconstitution of recombinant human replication factor C (RFC) and identification of an RFC subcomplex possessing DNA-dependent ATPase activity.</title>
        <authorList>
            <person name="Ellison V."/>
            <person name="Stillman B."/>
        </authorList>
    </citation>
    <scope>FUNCTION</scope>
    <scope>SUBUNIT</scope>
</reference>
<reference key="8">
    <citation type="journal article" date="2000" name="J. Biol. Chem.">
        <title>The human checkpoint protein hRad17 interacts with the PCNA-like proteins hRad1, hHus1, and hRad9.</title>
        <authorList>
            <person name="Rauen M."/>
            <person name="Burtelow M.A."/>
            <person name="Dufault V.M."/>
            <person name="Karnitz L.M."/>
        </authorList>
    </citation>
    <scope>INTERACTION WITH RAD17</scope>
</reference>
<reference key="9">
    <citation type="journal article" date="2001" name="Proc. Natl. Acad. Sci. U.S.A.">
        <title>Purification and characterization of human DNA damage checkpoint Rad complexes.</title>
        <authorList>
            <person name="Lindsey-Boltz L.A."/>
            <person name="Bermudez V.P."/>
            <person name="Hurwitz J."/>
            <person name="Sancar A."/>
        </authorList>
    </citation>
    <scope>INTERACTION WITH RAD17</scope>
</reference>
<reference key="10">
    <citation type="journal article" date="2007" name="Science">
        <title>ATM and ATR substrate analysis reveals extensive protein networks responsive to DNA damage.</title>
        <authorList>
            <person name="Matsuoka S."/>
            <person name="Ballif B.A."/>
            <person name="Smogorzewska A."/>
            <person name="McDonald E.R. III"/>
            <person name="Hurov K.E."/>
            <person name="Luo J."/>
            <person name="Bakalarski C.E."/>
            <person name="Zhao Z."/>
            <person name="Solimini N."/>
            <person name="Lerenthal Y."/>
            <person name="Shiloh Y."/>
            <person name="Gygi S.P."/>
            <person name="Elledge S.J."/>
        </authorList>
    </citation>
    <scope>PHOSPHORYLATION [LARGE SCALE ANALYSIS] AT SER-125</scope>
    <scope>IDENTIFICATION BY MASS SPECTROMETRY [LARGE SCALE ANALYSIS]</scope>
    <source>
        <tissue>Embryonic kidney</tissue>
    </source>
</reference>
<reference key="11">
    <citation type="journal article" date="2009" name="Science">
        <title>Lysine acetylation targets protein complexes and co-regulates major cellular functions.</title>
        <authorList>
            <person name="Choudhary C."/>
            <person name="Kumar C."/>
            <person name="Gnad F."/>
            <person name="Nielsen M.L."/>
            <person name="Rehman M."/>
            <person name="Walther T.C."/>
            <person name="Olsen J.V."/>
            <person name="Mann M."/>
        </authorList>
    </citation>
    <scope>ACETYLATION [LARGE SCALE ANALYSIS] AT LYS-20</scope>
    <scope>IDENTIFICATION BY MASS SPECTROMETRY [LARGE SCALE ANALYSIS]</scope>
</reference>
<reference key="12">
    <citation type="journal article" date="2011" name="BMC Syst. Biol.">
        <title>Initial characterization of the human central proteome.</title>
        <authorList>
            <person name="Burkard T.R."/>
            <person name="Planyavsky M."/>
            <person name="Kaupe I."/>
            <person name="Breitwieser F.P."/>
            <person name="Buerckstuemmer T."/>
            <person name="Bennett K.L."/>
            <person name="Superti-Furga G."/>
            <person name="Colinge J."/>
        </authorList>
    </citation>
    <scope>IDENTIFICATION BY MASS SPECTROMETRY [LARGE SCALE ANALYSIS]</scope>
</reference>
<reference key="13">
    <citation type="journal article" date="2013" name="J. Proteome Res.">
        <title>Toward a comprehensive characterization of a human cancer cell phosphoproteome.</title>
        <authorList>
            <person name="Zhou H."/>
            <person name="Di Palma S."/>
            <person name="Preisinger C."/>
            <person name="Peng M."/>
            <person name="Polat A.N."/>
            <person name="Heck A.J."/>
            <person name="Mohammed S."/>
        </authorList>
    </citation>
    <scope>IDENTIFICATION BY MASS SPECTROMETRY [LARGE SCALE ANALYSIS]</scope>
    <source>
        <tissue>Cervix carcinoma</tissue>
        <tissue>Erythroleukemia</tissue>
    </source>
</reference>
<gene>
    <name type="primary">RFC3</name>
</gene>
<protein>
    <recommendedName>
        <fullName>Replication factor C subunit 3</fullName>
    </recommendedName>
    <alternativeName>
        <fullName>Activator 1 38 kDa subunit</fullName>
        <shortName>A1 38 kDa subunit</shortName>
    </alternativeName>
    <alternativeName>
        <fullName>Activator 1 subunit 3</fullName>
    </alternativeName>
    <alternativeName>
        <fullName>Replication factor C 38 kDa subunit</fullName>
        <shortName>RF-C 38 kDa subunit</shortName>
        <shortName>RFC38</shortName>
    </alternativeName>
</protein>
<name>RFC3_HUMAN</name>
<accession>P40938</accession>
<accession>C9JU95</accession>
<accession>O15252</accession>
<accession>Q5W0E8</accession>
<keyword id="KW-0002">3D-structure</keyword>
<keyword id="KW-0007">Acetylation</keyword>
<keyword id="KW-0025">Alternative splicing</keyword>
<keyword id="KW-0235">DNA replication</keyword>
<keyword id="KW-0238">DNA-binding</keyword>
<keyword id="KW-0539">Nucleus</keyword>
<keyword id="KW-0597">Phosphoprotein</keyword>
<keyword id="KW-1267">Proteomics identification</keyword>
<keyword id="KW-1185">Reference proteome</keyword>
<feature type="chain" id="PRO_0000121761" description="Replication factor C subunit 3">
    <location>
        <begin position="1"/>
        <end position="356"/>
    </location>
</feature>
<feature type="modified residue" description="N6-acetyllysine" evidence="9">
    <location>
        <position position="20"/>
    </location>
</feature>
<feature type="modified residue" description="Phosphoserine" evidence="8">
    <location>
        <position position="125"/>
    </location>
</feature>
<feature type="splice variant" id="VSP_044920" description="In isoform 2." evidence="6">
    <original>GLLSELLHNCDGQLKGEVAQMAAYYEHRLQLGSKAIYHLEAFVAKFMALYKKFMEDGLEGMMF</original>
    <variation>ACKEESRSCDIF</variation>
    <location>
        <begin position="294"/>
        <end position="356"/>
    </location>
</feature>
<feature type="sequence variant" id="VAR_018750" description="In dbSNP:rs3135533." evidence="5">
    <original>L</original>
    <variation>V</variation>
    <location>
        <position position="16"/>
    </location>
</feature>
<feature type="helix" evidence="14">
    <location>
        <begin position="4"/>
        <end position="7"/>
    </location>
</feature>
<feature type="helix" evidence="14">
    <location>
        <begin position="13"/>
        <end position="15"/>
    </location>
</feature>
<feature type="helix" evidence="14">
    <location>
        <begin position="20"/>
        <end position="29"/>
    </location>
</feature>
<feature type="strand" evidence="14">
    <location>
        <begin position="30"/>
        <end position="33"/>
    </location>
</feature>
<feature type="strand" evidence="14">
    <location>
        <begin position="37"/>
        <end position="41"/>
    </location>
</feature>
<feature type="helix" evidence="14">
    <location>
        <begin position="48"/>
        <end position="59"/>
    </location>
</feature>
<feature type="helix" evidence="14">
    <location>
        <begin position="62"/>
        <end position="65"/>
    </location>
</feature>
<feature type="strand" evidence="14">
    <location>
        <begin position="68"/>
        <end position="75"/>
    </location>
</feature>
<feature type="strand" evidence="13">
    <location>
        <begin position="77"/>
        <end position="79"/>
    </location>
</feature>
<feature type="strand" evidence="14">
    <location>
        <begin position="81"/>
        <end position="88"/>
    </location>
</feature>
<feature type="strand" evidence="14">
    <location>
        <begin position="90"/>
        <end position="95"/>
    </location>
</feature>
<feature type="helix" evidence="14">
    <location>
        <begin position="97"/>
        <end position="103"/>
    </location>
</feature>
<feature type="helix" evidence="14">
    <location>
        <begin position="104"/>
        <end position="116"/>
    </location>
</feature>
<feature type="turn" evidence="10">
    <location>
        <begin position="120"/>
        <end position="122"/>
    </location>
</feature>
<feature type="strand" evidence="14">
    <location>
        <begin position="123"/>
        <end position="126"/>
    </location>
</feature>
<feature type="strand" evidence="14">
    <location>
        <begin position="130"/>
        <end position="135"/>
    </location>
</feature>
<feature type="helix" evidence="14">
    <location>
        <begin position="137"/>
        <end position="139"/>
    </location>
</feature>
<feature type="helix" evidence="14">
    <location>
        <begin position="142"/>
        <end position="148"/>
    </location>
</feature>
<feature type="helix" evidence="14">
    <location>
        <begin position="151"/>
        <end position="154"/>
    </location>
</feature>
<feature type="turn" evidence="14">
    <location>
        <begin position="155"/>
        <end position="158"/>
    </location>
</feature>
<feature type="strand" evidence="14">
    <location>
        <begin position="159"/>
        <end position="166"/>
    </location>
</feature>
<feature type="helix" evidence="14">
    <location>
        <begin position="168"/>
        <end position="170"/>
    </location>
</feature>
<feature type="helix" evidence="14">
    <location>
        <begin position="173"/>
        <end position="178"/>
    </location>
</feature>
<feature type="strand" evidence="14">
    <location>
        <begin position="179"/>
        <end position="183"/>
    </location>
</feature>
<feature type="helix" evidence="14">
    <location>
        <begin position="189"/>
        <end position="202"/>
    </location>
</feature>
<feature type="helix" evidence="14">
    <location>
        <begin position="209"/>
        <end position="218"/>
    </location>
</feature>
<feature type="turn" evidence="12">
    <location>
        <begin position="219"/>
        <end position="221"/>
    </location>
</feature>
<feature type="helix" evidence="14">
    <location>
        <begin position="223"/>
        <end position="236"/>
    </location>
</feature>
<feature type="helix" evidence="14">
    <location>
        <begin position="250"/>
        <end position="264"/>
    </location>
</feature>
<feature type="helix" evidence="14">
    <location>
        <begin position="268"/>
        <end position="283"/>
    </location>
</feature>
<feature type="helix" evidence="14">
    <location>
        <begin position="288"/>
        <end position="299"/>
    </location>
</feature>
<feature type="strand" evidence="11">
    <location>
        <begin position="300"/>
        <end position="303"/>
    </location>
</feature>
<feature type="turn" evidence="14">
    <location>
        <begin position="305"/>
        <end position="307"/>
    </location>
</feature>
<feature type="helix" evidence="14">
    <location>
        <begin position="308"/>
        <end position="324"/>
    </location>
</feature>
<feature type="helix" evidence="14">
    <location>
        <begin position="328"/>
        <end position="348"/>
    </location>
</feature>
<dbReference type="EMBL" id="L07541">
    <property type="protein sequence ID" value="AAB07268.1"/>
    <property type="molecule type" value="mRNA"/>
</dbReference>
<dbReference type="EMBL" id="AF484446">
    <property type="protein sequence ID" value="AAL82505.1"/>
    <property type="molecule type" value="Genomic_DNA"/>
</dbReference>
<dbReference type="EMBL" id="AL139081">
    <property type="status" value="NOT_ANNOTATED_CDS"/>
    <property type="molecule type" value="Genomic_DNA"/>
</dbReference>
<dbReference type="EMBL" id="AL160394">
    <property type="status" value="NOT_ANNOTATED_CDS"/>
    <property type="molecule type" value="Genomic_DNA"/>
</dbReference>
<dbReference type="EMBL" id="AL161891">
    <property type="status" value="NOT_ANNOTATED_CDS"/>
    <property type="molecule type" value="Genomic_DNA"/>
</dbReference>
<dbReference type="EMBL" id="CH471075">
    <property type="protein sequence ID" value="EAX08537.1"/>
    <property type="molecule type" value="Genomic_DNA"/>
</dbReference>
<dbReference type="EMBL" id="BC000149">
    <property type="protein sequence ID" value="AAH00149.1"/>
    <property type="molecule type" value="mRNA"/>
</dbReference>
<dbReference type="EMBL" id="CX786577">
    <property type="status" value="NOT_ANNOTATED_CDS"/>
    <property type="molecule type" value="mRNA"/>
</dbReference>
<dbReference type="CCDS" id="CCDS45025.1">
    <molecule id="P40938-2"/>
</dbReference>
<dbReference type="CCDS" id="CCDS9352.1">
    <molecule id="P40938-1"/>
</dbReference>
<dbReference type="PIR" id="T09573">
    <property type="entry name" value="T09573"/>
</dbReference>
<dbReference type="RefSeq" id="NP_002906.1">
    <molecule id="P40938-1"/>
    <property type="nucleotide sequence ID" value="NM_002915.4"/>
</dbReference>
<dbReference type="RefSeq" id="NP_853536.2">
    <molecule id="P40938-2"/>
    <property type="nucleotide sequence ID" value="NM_181558.3"/>
</dbReference>
<dbReference type="PDB" id="6VVO">
    <property type="method" value="EM"/>
    <property type="resolution" value="3.40 A"/>
    <property type="chains" value="E=1-356"/>
</dbReference>
<dbReference type="PDB" id="7Z6H">
    <property type="method" value="EM"/>
    <property type="resolution" value="3.59 A"/>
    <property type="chains" value="E=1-356"/>
</dbReference>
<dbReference type="PDB" id="8UI7">
    <property type="method" value="EM"/>
    <property type="resolution" value="4.20 A"/>
    <property type="chains" value="E=1-356"/>
</dbReference>
<dbReference type="PDB" id="8UI8">
    <property type="method" value="EM"/>
    <property type="resolution" value="3.10 A"/>
    <property type="chains" value="E=1-356"/>
</dbReference>
<dbReference type="PDB" id="8UI9">
    <property type="method" value="EM"/>
    <property type="resolution" value="3.50 A"/>
    <property type="chains" value="E=1-356"/>
</dbReference>
<dbReference type="PDB" id="8UII">
    <property type="method" value="EM"/>
    <property type="resolution" value="3.04 A"/>
    <property type="chains" value="E=1-356"/>
</dbReference>
<dbReference type="PDB" id="8UMT">
    <property type="method" value="EM"/>
    <property type="resolution" value="3.33 A"/>
    <property type="chains" value="E=1-356"/>
</dbReference>
<dbReference type="PDB" id="8UMU">
    <property type="method" value="EM"/>
    <property type="resolution" value="3.16 A"/>
    <property type="chains" value="E=1-356"/>
</dbReference>
<dbReference type="PDB" id="8UMV">
    <property type="method" value="EM"/>
    <property type="resolution" value="2.75 A"/>
    <property type="chains" value="E=1-356"/>
</dbReference>
<dbReference type="PDB" id="8UMW">
    <property type="method" value="EM"/>
    <property type="resolution" value="2.93 A"/>
    <property type="chains" value="E=1-356"/>
</dbReference>
<dbReference type="PDB" id="8UMY">
    <property type="method" value="EM"/>
    <property type="resolution" value="2.83 A"/>
    <property type="chains" value="E=1-356"/>
</dbReference>
<dbReference type="PDB" id="8UN0">
    <property type="method" value="EM"/>
    <property type="resolution" value="3.00 A"/>
    <property type="chains" value="E=1-356"/>
</dbReference>
<dbReference type="PDB" id="8UNJ">
    <property type="method" value="EM"/>
    <property type="resolution" value="3.35 A"/>
    <property type="chains" value="E=1-356"/>
</dbReference>
<dbReference type="PDBsum" id="6VVO"/>
<dbReference type="PDBsum" id="7Z6H"/>
<dbReference type="PDBsum" id="8UI7"/>
<dbReference type="PDBsum" id="8UI8"/>
<dbReference type="PDBsum" id="8UI9"/>
<dbReference type="PDBsum" id="8UII"/>
<dbReference type="PDBsum" id="8UMT"/>
<dbReference type="PDBsum" id="8UMU"/>
<dbReference type="PDBsum" id="8UMV"/>
<dbReference type="PDBsum" id="8UMW"/>
<dbReference type="PDBsum" id="8UMY"/>
<dbReference type="PDBsum" id="8UN0"/>
<dbReference type="PDBsum" id="8UNJ"/>
<dbReference type="EMDB" id="EMD-14527"/>
<dbReference type="EMDB" id="EMD-21405"/>
<dbReference type="EMDB" id="EMD-42287"/>
<dbReference type="EMDB" id="EMD-42288"/>
<dbReference type="EMDB" id="EMD-42289"/>
<dbReference type="EMDB" id="EMD-42295"/>
<dbReference type="EMDB" id="EMD-42383"/>
<dbReference type="EMDB" id="EMD-42384"/>
<dbReference type="EMDB" id="EMD-42385"/>
<dbReference type="EMDB" id="EMD-42386"/>
<dbReference type="EMDB" id="EMD-42388"/>
<dbReference type="EMDB" id="EMD-42389"/>
<dbReference type="EMDB" id="EMD-42406"/>
<dbReference type="SMR" id="P40938"/>
<dbReference type="BioGRID" id="111915">
    <property type="interactions" value="205"/>
</dbReference>
<dbReference type="ComplexPortal" id="CPX-415">
    <property type="entry name" value="DNA replication factor C complex"/>
</dbReference>
<dbReference type="ComplexPortal" id="CPX-7931">
    <property type="entry name" value="DNA replication factor C complex, RAD17 variant"/>
</dbReference>
<dbReference type="CORUM" id="P40938"/>
<dbReference type="DIP" id="DIP-36432N"/>
<dbReference type="FunCoup" id="P40938">
    <property type="interactions" value="3115"/>
</dbReference>
<dbReference type="IntAct" id="P40938">
    <property type="interactions" value="92"/>
</dbReference>
<dbReference type="MINT" id="P40938"/>
<dbReference type="STRING" id="9606.ENSP00000369411"/>
<dbReference type="GlyGen" id="P40938">
    <property type="glycosylation" value="1 site, 1 O-linked glycan (1 site)"/>
</dbReference>
<dbReference type="iPTMnet" id="P40938"/>
<dbReference type="MetOSite" id="P40938"/>
<dbReference type="PhosphoSitePlus" id="P40938"/>
<dbReference type="SwissPalm" id="P40938"/>
<dbReference type="BioMuta" id="RFC3"/>
<dbReference type="DMDM" id="3915601"/>
<dbReference type="jPOST" id="P40938"/>
<dbReference type="MassIVE" id="P40938"/>
<dbReference type="PaxDb" id="9606-ENSP00000369411"/>
<dbReference type="PeptideAtlas" id="P40938"/>
<dbReference type="ProteomicsDB" id="11702"/>
<dbReference type="ProteomicsDB" id="55391">
    <molecule id="P40938-1"/>
</dbReference>
<dbReference type="Pumba" id="P40938"/>
<dbReference type="Antibodypedia" id="7909">
    <property type="antibodies" value="268 antibodies from 33 providers"/>
</dbReference>
<dbReference type="DNASU" id="5983"/>
<dbReference type="Ensembl" id="ENST00000380071.8">
    <molecule id="P40938-1"/>
    <property type="protein sequence ID" value="ENSP00000369411.3"/>
    <property type="gene ID" value="ENSG00000133119.13"/>
</dbReference>
<dbReference type="Ensembl" id="ENST00000434425.5">
    <molecule id="P40938-2"/>
    <property type="protein sequence ID" value="ENSP00000401001.1"/>
    <property type="gene ID" value="ENSG00000133119.13"/>
</dbReference>
<dbReference type="GeneID" id="5983"/>
<dbReference type="KEGG" id="hsa:5983"/>
<dbReference type="MANE-Select" id="ENST00000380071.8">
    <property type="protein sequence ID" value="ENSP00000369411.3"/>
    <property type="RefSeq nucleotide sequence ID" value="NM_002915.4"/>
    <property type="RefSeq protein sequence ID" value="NP_002906.1"/>
</dbReference>
<dbReference type="UCSC" id="uc001uuz.4">
    <molecule id="P40938-1"/>
    <property type="organism name" value="human"/>
</dbReference>
<dbReference type="AGR" id="HGNC:9971"/>
<dbReference type="CTD" id="5983"/>
<dbReference type="DisGeNET" id="5983"/>
<dbReference type="GeneCards" id="RFC3"/>
<dbReference type="HGNC" id="HGNC:9971">
    <property type="gene designation" value="RFC3"/>
</dbReference>
<dbReference type="HPA" id="ENSG00000133119">
    <property type="expression patterns" value="Low tissue specificity"/>
</dbReference>
<dbReference type="MalaCards" id="RFC3"/>
<dbReference type="MIM" id="600405">
    <property type="type" value="gene"/>
</dbReference>
<dbReference type="neXtProt" id="NX_P40938"/>
<dbReference type="OpenTargets" id="ENSG00000133119"/>
<dbReference type="PharmGKB" id="PA34340"/>
<dbReference type="VEuPathDB" id="HostDB:ENSG00000133119"/>
<dbReference type="eggNOG" id="KOG2035">
    <property type="taxonomic scope" value="Eukaryota"/>
</dbReference>
<dbReference type="GeneTree" id="ENSGT00550000075006"/>
<dbReference type="HOGENOM" id="CLU_042324_5_0_1"/>
<dbReference type="InParanoid" id="P40938"/>
<dbReference type="OMA" id="LKADIMH"/>
<dbReference type="OrthoDB" id="761538at2759"/>
<dbReference type="PAN-GO" id="P40938">
    <property type="GO annotations" value="5 GO annotations based on evolutionary models"/>
</dbReference>
<dbReference type="PhylomeDB" id="P40938"/>
<dbReference type="TreeFam" id="TF105724"/>
<dbReference type="BRENDA" id="3.6.4.B8">
    <property type="organism ID" value="2681"/>
</dbReference>
<dbReference type="PathwayCommons" id="P40938"/>
<dbReference type="Reactome" id="R-HSA-110312">
    <property type="pathway name" value="Translesion synthesis by REV1"/>
</dbReference>
<dbReference type="Reactome" id="R-HSA-110314">
    <property type="pathway name" value="Recognition of DNA damage by PCNA-containing replication complex"/>
</dbReference>
<dbReference type="Reactome" id="R-HSA-110320">
    <property type="pathway name" value="Translesion Synthesis by POLH"/>
</dbReference>
<dbReference type="Reactome" id="R-HSA-174411">
    <property type="pathway name" value="Polymerase switching on the C-strand of the telomere"/>
</dbReference>
<dbReference type="Reactome" id="R-HSA-176187">
    <property type="pathway name" value="Activation of ATR in response to replication stress"/>
</dbReference>
<dbReference type="Reactome" id="R-HSA-5651801">
    <property type="pathway name" value="PCNA-Dependent Long Patch Base Excision Repair"/>
</dbReference>
<dbReference type="Reactome" id="R-HSA-5655862">
    <property type="pathway name" value="Translesion synthesis by POLK"/>
</dbReference>
<dbReference type="Reactome" id="R-HSA-5656121">
    <property type="pathway name" value="Translesion synthesis by POLI"/>
</dbReference>
<dbReference type="Reactome" id="R-HSA-5656169">
    <property type="pathway name" value="Termination of translesion DNA synthesis"/>
</dbReference>
<dbReference type="Reactome" id="R-HSA-5685938">
    <property type="pathway name" value="HDR through Single Strand Annealing (SSA)"/>
</dbReference>
<dbReference type="Reactome" id="R-HSA-5685942">
    <property type="pathway name" value="HDR through Homologous Recombination (HRR)"/>
</dbReference>
<dbReference type="Reactome" id="R-HSA-5693607">
    <property type="pathway name" value="Processing of DNA double-strand break ends"/>
</dbReference>
<dbReference type="Reactome" id="R-HSA-5693616">
    <property type="pathway name" value="Presynaptic phase of homologous DNA pairing and strand exchange"/>
</dbReference>
<dbReference type="Reactome" id="R-HSA-5696397">
    <property type="pathway name" value="Gap-filling DNA repair synthesis and ligation in GG-NER"/>
</dbReference>
<dbReference type="Reactome" id="R-HSA-5696400">
    <property type="pathway name" value="Dual Incision in GG-NER"/>
</dbReference>
<dbReference type="Reactome" id="R-HSA-6782135">
    <property type="pathway name" value="Dual incision in TC-NER"/>
</dbReference>
<dbReference type="Reactome" id="R-HSA-6782210">
    <property type="pathway name" value="Gap-filling DNA repair synthesis and ligation in TC-NER"/>
</dbReference>
<dbReference type="Reactome" id="R-HSA-6804756">
    <property type="pathway name" value="Regulation of TP53 Activity through Phosphorylation"/>
</dbReference>
<dbReference type="Reactome" id="R-HSA-69091">
    <property type="pathway name" value="Polymerase switching"/>
</dbReference>
<dbReference type="Reactome" id="R-HSA-69473">
    <property type="pathway name" value="G2/M DNA damage checkpoint"/>
</dbReference>
<dbReference type="Reactome" id="R-HSA-9709570">
    <property type="pathway name" value="Impaired BRCA2 binding to RAD51"/>
</dbReference>
<dbReference type="SignaLink" id="P40938"/>
<dbReference type="SIGNOR" id="P40938"/>
<dbReference type="BioGRID-ORCS" id="5983">
    <property type="hits" value="805 hits in 1169 CRISPR screens"/>
</dbReference>
<dbReference type="CD-CODE" id="91857CE7">
    <property type="entry name" value="Nucleolus"/>
</dbReference>
<dbReference type="CD-CODE" id="DEE660B4">
    <property type="entry name" value="Stress granule"/>
</dbReference>
<dbReference type="ChiTaRS" id="RFC3">
    <property type="organism name" value="human"/>
</dbReference>
<dbReference type="GeneWiki" id="RFC3"/>
<dbReference type="GenomeRNAi" id="5983"/>
<dbReference type="Pharos" id="P40938">
    <property type="development level" value="Tbio"/>
</dbReference>
<dbReference type="PRO" id="PR:P40938"/>
<dbReference type="Proteomes" id="UP000005640">
    <property type="component" value="Chromosome 13"/>
</dbReference>
<dbReference type="RNAct" id="P40938">
    <property type="molecule type" value="protein"/>
</dbReference>
<dbReference type="Bgee" id="ENSG00000133119">
    <property type="expression patterns" value="Expressed in primordial germ cell in gonad and 190 other cell types or tissues"/>
</dbReference>
<dbReference type="ExpressionAtlas" id="P40938">
    <property type="expression patterns" value="baseline and differential"/>
</dbReference>
<dbReference type="GO" id="GO:0031390">
    <property type="term" value="C:Ctf18 RFC-like complex"/>
    <property type="evidence" value="ECO:0000314"/>
    <property type="project" value="UniProtKB"/>
</dbReference>
<dbReference type="GO" id="GO:0005663">
    <property type="term" value="C:DNA replication factor C complex"/>
    <property type="evidence" value="ECO:0000314"/>
    <property type="project" value="UniProtKB"/>
</dbReference>
<dbReference type="GO" id="GO:0005654">
    <property type="term" value="C:nucleoplasm"/>
    <property type="evidence" value="ECO:0000304"/>
    <property type="project" value="Reactome"/>
</dbReference>
<dbReference type="GO" id="GO:0005634">
    <property type="term" value="C:nucleus"/>
    <property type="evidence" value="ECO:0000318"/>
    <property type="project" value="GO_Central"/>
</dbReference>
<dbReference type="GO" id="GO:0016887">
    <property type="term" value="F:ATP hydrolysis activity"/>
    <property type="evidence" value="ECO:0007669"/>
    <property type="project" value="InterPro"/>
</dbReference>
<dbReference type="GO" id="GO:0008094">
    <property type="term" value="F:ATP-dependent activity, acting on DNA"/>
    <property type="evidence" value="ECO:0000314"/>
    <property type="project" value="UniProtKB"/>
</dbReference>
<dbReference type="GO" id="GO:0003677">
    <property type="term" value="F:DNA binding"/>
    <property type="evidence" value="ECO:0007669"/>
    <property type="project" value="UniProtKB-KW"/>
</dbReference>
<dbReference type="GO" id="GO:0003689">
    <property type="term" value="F:DNA clamp loader activity"/>
    <property type="evidence" value="ECO:0000304"/>
    <property type="project" value="UniProtKB"/>
</dbReference>
<dbReference type="GO" id="GO:0006281">
    <property type="term" value="P:DNA repair"/>
    <property type="evidence" value="ECO:0000318"/>
    <property type="project" value="GO_Central"/>
</dbReference>
<dbReference type="GO" id="GO:0006260">
    <property type="term" value="P:DNA replication"/>
    <property type="evidence" value="ECO:0000314"/>
    <property type="project" value="UniProtKB"/>
</dbReference>
<dbReference type="GO" id="GO:0006271">
    <property type="term" value="P:DNA strand elongation involved in DNA replication"/>
    <property type="evidence" value="ECO:0000304"/>
    <property type="project" value="ProtInc"/>
</dbReference>
<dbReference type="GO" id="GO:0000731">
    <property type="term" value="P:DNA synthesis involved in DNA repair"/>
    <property type="evidence" value="ECO:0000304"/>
    <property type="project" value="UniProtKB"/>
</dbReference>
<dbReference type="GO" id="GO:0006261">
    <property type="term" value="P:DNA-templated DNA replication"/>
    <property type="evidence" value="ECO:0000314"/>
    <property type="project" value="ComplexPortal"/>
</dbReference>
<dbReference type="GO" id="GO:1900264">
    <property type="term" value="P:positive regulation of DNA-directed DNA polymerase activity"/>
    <property type="evidence" value="ECO:0000314"/>
    <property type="project" value="UniProtKB"/>
</dbReference>
<dbReference type="CDD" id="cd00009">
    <property type="entry name" value="AAA"/>
    <property type="match status" value="1"/>
</dbReference>
<dbReference type="FunFam" id="1.20.272.10:FF:000002">
    <property type="entry name" value="Replication factor C subunit 3"/>
    <property type="match status" value="1"/>
</dbReference>
<dbReference type="FunFam" id="1.10.8.60:FF:000030">
    <property type="entry name" value="replication factor C subunit 3"/>
    <property type="match status" value="1"/>
</dbReference>
<dbReference type="FunFam" id="3.40.50.300:FF:000136">
    <property type="entry name" value="Replication factor C subunit 5"/>
    <property type="match status" value="1"/>
</dbReference>
<dbReference type="Gene3D" id="1.10.8.60">
    <property type="match status" value="1"/>
</dbReference>
<dbReference type="Gene3D" id="1.20.272.10">
    <property type="match status" value="1"/>
</dbReference>
<dbReference type="Gene3D" id="3.40.50.300">
    <property type="entry name" value="P-loop containing nucleotide triphosphate hydrolases"/>
    <property type="match status" value="1"/>
</dbReference>
<dbReference type="InterPro" id="IPR003593">
    <property type="entry name" value="AAA+_ATPase"/>
</dbReference>
<dbReference type="InterPro" id="IPR008921">
    <property type="entry name" value="DNA_pol3_clamp-load_cplx_C"/>
</dbReference>
<dbReference type="InterPro" id="IPR050238">
    <property type="entry name" value="DNA_Rep/Repair_Clamp_Loader"/>
</dbReference>
<dbReference type="InterPro" id="IPR027417">
    <property type="entry name" value="P-loop_NTPase"/>
</dbReference>
<dbReference type="PANTHER" id="PTHR11669">
    <property type="entry name" value="REPLICATION FACTOR C / DNA POLYMERASE III GAMMA-TAU SUBUNIT"/>
    <property type="match status" value="1"/>
</dbReference>
<dbReference type="PANTHER" id="PTHR11669:SF1">
    <property type="entry name" value="REPLICATION FACTOR C SUBUNIT 3"/>
    <property type="match status" value="1"/>
</dbReference>
<dbReference type="Pfam" id="PF13177">
    <property type="entry name" value="DNA_pol3_delta2"/>
    <property type="match status" value="1"/>
</dbReference>
<dbReference type="Pfam" id="PF21960">
    <property type="entry name" value="RCF1-5-like_lid"/>
    <property type="match status" value="1"/>
</dbReference>
<dbReference type="Pfam" id="PF22534">
    <property type="entry name" value="RFC_C"/>
    <property type="match status" value="1"/>
</dbReference>
<dbReference type="SMART" id="SM00382">
    <property type="entry name" value="AAA"/>
    <property type="match status" value="1"/>
</dbReference>
<dbReference type="SUPFAM" id="SSF52540">
    <property type="entry name" value="P-loop containing nucleoside triphosphate hydrolases"/>
    <property type="match status" value="1"/>
</dbReference>
<dbReference type="SUPFAM" id="SSF48019">
    <property type="entry name" value="post-AAA+ oligomerization domain-like"/>
    <property type="match status" value="1"/>
</dbReference>
<evidence type="ECO:0000250" key="1">
    <source>
        <dbReference type="UniProtKB" id="Q8R323"/>
    </source>
</evidence>
<evidence type="ECO:0000269" key="2">
    <source>
    </source>
</evidence>
<evidence type="ECO:0000269" key="3">
    <source>
    </source>
</evidence>
<evidence type="ECO:0000269" key="4">
    <source>
    </source>
</evidence>
<evidence type="ECO:0000269" key="5">
    <source ref="2"/>
</evidence>
<evidence type="ECO:0000303" key="6">
    <source>
    </source>
</evidence>
<evidence type="ECO:0000305" key="7"/>
<evidence type="ECO:0007744" key="8">
    <source>
    </source>
</evidence>
<evidence type="ECO:0007744" key="9">
    <source>
    </source>
</evidence>
<evidence type="ECO:0007829" key="10">
    <source>
        <dbReference type="PDB" id="6VVO"/>
    </source>
</evidence>
<evidence type="ECO:0007829" key="11">
    <source>
        <dbReference type="PDB" id="8UI8"/>
    </source>
</evidence>
<evidence type="ECO:0007829" key="12">
    <source>
        <dbReference type="PDB" id="8UMT"/>
    </source>
</evidence>
<evidence type="ECO:0007829" key="13">
    <source>
        <dbReference type="PDB" id="8UMU"/>
    </source>
</evidence>
<evidence type="ECO:0007829" key="14">
    <source>
        <dbReference type="PDB" id="8UMY"/>
    </source>
</evidence>
<comment type="function">
    <text evidence="4">Subunit of the replication factor C (RFC) complex which acts during elongation of primed DNA templates by DNA polymerases delta and epsilon, and is necessary for ATP-dependent loading of proliferating cell nuclear antigen (PCNA) onto primed DNA.</text>
</comment>
<comment type="subunit">
    <text evidence="1 2 3">Subunit of the RFC complex, an heteropentameric complex consisting of a large subunit RFC1 and four small subunits RFC2, RFC3, RFC4 and RFC5; the RFC complex interacts with PCNA (PubMed:8999859, PubMed:9488738). Forms an heterotetrameric complex with RFC2, RFC4 and RFC5; this complex has ATPase activity but is not stimulated by PCNA (PubMed:9488738). The heterotetramer of subunits RFC2, RFC3, RFC4 and RFC5 interacts with RAD17 (PubMed:10884395, PubMed:11572977). Interacts with CNTD1; this interaction facilitates crossover formation (By similarity).</text>
</comment>
<comment type="interaction">
    <interactant intactId="EBI-1055010">
        <id>P40938</id>
    </interactant>
    <interactant intactId="EBI-2838246">
        <id>Q6AI12</id>
        <label>ANKRD40</label>
    </interactant>
    <organismsDiffer>false</organismsDiffer>
    <experiments>3</experiments>
</comment>
<comment type="interaction">
    <interactant intactId="EBI-1055010">
        <id>P40938</id>
    </interactant>
    <interactant intactId="EBI-6509505">
        <id>Q0VD86</id>
        <label>INCA1</label>
    </interactant>
    <organismsDiffer>false</organismsDiffer>
    <experiments>3</experiments>
</comment>
<comment type="interaction">
    <interactant intactId="EBI-1055010">
        <id>P40938</id>
    </interactant>
    <interactant intactId="EBI-742808">
        <id>Q5VWX1</id>
        <label>KHDRBS2</label>
    </interactant>
    <organismsDiffer>false</organismsDiffer>
    <experiments>3</experiments>
</comment>
<comment type="interaction">
    <interactant intactId="EBI-1055010">
        <id>P40938</id>
    </interactant>
    <interactant intactId="EBI-722504">
        <id>O75525</id>
        <label>KHDRBS3</label>
    </interactant>
    <organismsDiffer>false</organismsDiffer>
    <experiments>3</experiments>
</comment>
<comment type="interaction">
    <interactant intactId="EBI-1055010">
        <id>P40938</id>
    </interactant>
    <interactant intactId="EBI-79165">
        <id>Q9NRD5</id>
        <label>PICK1</label>
    </interactant>
    <organismsDiffer>false</organismsDiffer>
    <experiments>3</experiments>
</comment>
<comment type="interaction">
    <interactant intactId="EBI-1055010">
        <id>P40938</id>
    </interactant>
    <interactant intactId="EBI-476655">
        <id>P35249</id>
        <label>RFC4</label>
    </interactant>
    <organismsDiffer>false</organismsDiffer>
    <experiments>14</experiments>
</comment>
<comment type="subcellular location">
    <subcellularLocation>
        <location evidence="7">Nucleus</location>
    </subcellularLocation>
</comment>
<comment type="alternative products">
    <event type="alternative splicing"/>
    <isoform>
        <id>P40938-1</id>
        <name>1</name>
        <sequence type="displayed"/>
    </isoform>
    <isoform>
        <id>P40938-2</id>
        <name>2</name>
        <sequence type="described" ref="VSP_044920"/>
    </isoform>
</comment>
<comment type="similarity">
    <text evidence="7">Belongs to the activator 1 small subunits family.</text>
</comment>
<sequence length="356" mass="40556">MSLWVDKYRPCSLGRLDYHKEQAAQLRNLVQCGDFPHLLVYGPSGAGKKTRIMCILRELYGVGVEKLRIEHQTITTPSKKKIEISTIASNYHLEVNPSDAGNSDRVVIQEMLKTVAQSQQLETNSQRDFKVVLLTEVDKLTKDAQHALRRTMEKYMSTCRLILCCNSTSKVIPPIRSRCLAVRVPAPSIEDICHVLSTVCKKEGLNLPSQLAHRLAEKSCRNLRKALLMCEACRVQQYPFTADQEIPETDWEVYLRETANAIVSQQTPQRLLEVRGRLYELLTHCIPPEIIMKGLLSELLHNCDGQLKGEVAQMAAYYEHRLQLGSKAIYHLEAFVAKFMALYKKFMEDGLEGMMF</sequence>